<reference key="1">
    <citation type="journal article" date="2001" name="Proc. Natl. Acad. Sci. U.S.A.">
        <title>The CYP88A cytochrome P450, ent-kaurenoic acid oxidase, catalyzes three steps of the gibberellin biosynthesis pathway.</title>
        <authorList>
            <person name="Helliwell C.A."/>
            <person name="Chandler P.M."/>
            <person name="Poole A."/>
            <person name="Dennis E.S."/>
            <person name="Peacock J.W."/>
        </authorList>
    </citation>
    <scope>NUCLEOTIDE SEQUENCE [MRNA]</scope>
    <scope>FUNCTION</scope>
    <scope>CATALYTIC ACTIVITY</scope>
    <scope>MUTAGENESIS OF ASN-372</scope>
    <scope>PATHWAY</scope>
    <source>
        <strain>cv. Himalaya</strain>
    </source>
</reference>
<feature type="chain" id="PRO_0000052180" description="Ent-kaurenoic acid oxidase 1">
    <location>
        <begin position="1"/>
        <end position="499"/>
    </location>
</feature>
<feature type="transmembrane region" description="Helical" evidence="3">
    <location>
        <begin position="5"/>
        <end position="25"/>
    </location>
</feature>
<feature type="binding site" description="axial binding residue" evidence="2">
    <location>
        <position position="443"/>
    </location>
    <ligand>
        <name>heme</name>
        <dbReference type="ChEBI" id="CHEBI:30413"/>
    </ligand>
    <ligandPart>
        <name>Fe</name>
        <dbReference type="ChEBI" id="CHEBI:18248"/>
    </ligandPart>
</feature>
<feature type="mutagenesis site" description="In M594; induces dwarfism, due to accumulation of kaurenoic acid." evidence="4">
    <original>N</original>
    <variation>K</variation>
    <location>
        <position position="372"/>
    </location>
</feature>
<accession>Q9AXH9</accession>
<name>KAO1_HORVU</name>
<sequence>MGEGAWWAVAAVVAALAVVALDAAVRAAHAWYWTASLGAGRRGRLPPGDMGWPLVGGMWAFLRAFKSGRPDSFIDSFARRFGRAGLYRAFMFSSPTIMATTPEACKQVLMDDDAFVTGWPKATVALIGPKSFVNMGYDEHRRLRKLTAAPINGFDALTSYLGFIDDTVVTTLRGWSERGGDGHFEFLTELRRMTFRIIVQIFMGGADERTAAELERTYTELNYGMRAMAIDLPGFAYHKAIRARRRLVAALQRVLDERRARGGKTAAGAAAPVDMMDRLIAVEDEGGRRLQDDEIIDVLVMYLNAGHESSGHITMWATVFLQENPEILAKAKAEQEAIMRSIPPGQKGLTLRDFRKMAYLSQVVDETLRFVNISFVSFRQATRDVFVNGYLIPKGWKVQLWYRSVHMDPQVYPDPKKFDPSRWEGPPPRAGTFLPFGLGTRLCPGNDLAKLEISVFLHHFLLGYKLTRKNPNCRVRYLPHPRPVDNCLAKITRLSSSHG</sequence>
<organism>
    <name type="scientific">Hordeum vulgare</name>
    <name type="common">Barley</name>
    <dbReference type="NCBI Taxonomy" id="4513"/>
    <lineage>
        <taxon>Eukaryota</taxon>
        <taxon>Viridiplantae</taxon>
        <taxon>Streptophyta</taxon>
        <taxon>Embryophyta</taxon>
        <taxon>Tracheophyta</taxon>
        <taxon>Spermatophyta</taxon>
        <taxon>Magnoliopsida</taxon>
        <taxon>Liliopsida</taxon>
        <taxon>Poales</taxon>
        <taxon>Poaceae</taxon>
        <taxon>BOP clade</taxon>
        <taxon>Pooideae</taxon>
        <taxon>Triticodae</taxon>
        <taxon>Triticeae</taxon>
        <taxon>Hordeinae</taxon>
        <taxon>Hordeum</taxon>
    </lineage>
</organism>
<evidence type="ECO:0000250" key="1">
    <source>
        <dbReference type="UniProtKB" id="O23051"/>
    </source>
</evidence>
<evidence type="ECO:0000250" key="2">
    <source>
        <dbReference type="UniProtKB" id="P04798"/>
    </source>
</evidence>
<evidence type="ECO:0000255" key="3"/>
<evidence type="ECO:0000269" key="4">
    <source>
    </source>
</evidence>
<evidence type="ECO:0000303" key="5">
    <source>
    </source>
</evidence>
<evidence type="ECO:0000305" key="6"/>
<dbReference type="EC" id="1.14.14.107" evidence="4"/>
<dbReference type="EMBL" id="AF326277">
    <property type="protein sequence ID" value="AAK11616.1"/>
    <property type="molecule type" value="mRNA"/>
</dbReference>
<dbReference type="SMR" id="Q9AXH9"/>
<dbReference type="OMA" id="KLWEVYM"/>
<dbReference type="BRENDA" id="1.14.13.79">
    <property type="organism ID" value="2687"/>
</dbReference>
<dbReference type="BRENDA" id="1.14.14.107">
    <property type="organism ID" value="2687"/>
</dbReference>
<dbReference type="UniPathway" id="UPA00390"/>
<dbReference type="ExpressionAtlas" id="Q9AXH9">
    <property type="expression patterns" value="baseline and differential"/>
</dbReference>
<dbReference type="GO" id="GO:0005789">
    <property type="term" value="C:endoplasmic reticulum membrane"/>
    <property type="evidence" value="ECO:0007669"/>
    <property type="project" value="UniProtKB-SubCell"/>
</dbReference>
<dbReference type="GO" id="GO:0051777">
    <property type="term" value="F:ent-kaurenoic acid monooxygenase activity"/>
    <property type="evidence" value="ECO:0007669"/>
    <property type="project" value="UniProtKB-EC"/>
</dbReference>
<dbReference type="GO" id="GO:0020037">
    <property type="term" value="F:heme binding"/>
    <property type="evidence" value="ECO:0007669"/>
    <property type="project" value="InterPro"/>
</dbReference>
<dbReference type="GO" id="GO:0005506">
    <property type="term" value="F:iron ion binding"/>
    <property type="evidence" value="ECO:0007669"/>
    <property type="project" value="InterPro"/>
</dbReference>
<dbReference type="GO" id="GO:0016132">
    <property type="term" value="P:brassinosteroid biosynthetic process"/>
    <property type="evidence" value="ECO:0007669"/>
    <property type="project" value="TreeGrafter"/>
</dbReference>
<dbReference type="GO" id="GO:0010268">
    <property type="term" value="P:brassinosteroid homeostasis"/>
    <property type="evidence" value="ECO:0007669"/>
    <property type="project" value="TreeGrafter"/>
</dbReference>
<dbReference type="GO" id="GO:0009686">
    <property type="term" value="P:gibberellin biosynthetic process"/>
    <property type="evidence" value="ECO:0007669"/>
    <property type="project" value="UniProtKB-UniPathway"/>
</dbReference>
<dbReference type="GO" id="GO:0016125">
    <property type="term" value="P:sterol metabolic process"/>
    <property type="evidence" value="ECO:0007669"/>
    <property type="project" value="TreeGrafter"/>
</dbReference>
<dbReference type="CDD" id="cd11043">
    <property type="entry name" value="CYP90-like"/>
    <property type="match status" value="1"/>
</dbReference>
<dbReference type="FunFam" id="1.10.630.10:FF:000052">
    <property type="entry name" value="Ent-kaurenoic acid oxidase"/>
    <property type="match status" value="1"/>
</dbReference>
<dbReference type="Gene3D" id="1.10.630.10">
    <property type="entry name" value="Cytochrome P450"/>
    <property type="match status" value="1"/>
</dbReference>
<dbReference type="InterPro" id="IPR001128">
    <property type="entry name" value="Cyt_P450"/>
</dbReference>
<dbReference type="InterPro" id="IPR017972">
    <property type="entry name" value="Cyt_P450_CS"/>
</dbReference>
<dbReference type="InterPro" id="IPR002401">
    <property type="entry name" value="Cyt_P450_E_grp-I"/>
</dbReference>
<dbReference type="InterPro" id="IPR036396">
    <property type="entry name" value="Cyt_P450_sf"/>
</dbReference>
<dbReference type="PANTHER" id="PTHR24286">
    <property type="entry name" value="CYTOCHROME P450 26"/>
    <property type="match status" value="1"/>
</dbReference>
<dbReference type="PANTHER" id="PTHR24286:SF356">
    <property type="entry name" value="ENT-KAURENOIC ACID OXIDASE 2"/>
    <property type="match status" value="1"/>
</dbReference>
<dbReference type="Pfam" id="PF00067">
    <property type="entry name" value="p450"/>
    <property type="match status" value="1"/>
</dbReference>
<dbReference type="PRINTS" id="PR00463">
    <property type="entry name" value="EP450I"/>
</dbReference>
<dbReference type="PRINTS" id="PR00385">
    <property type="entry name" value="P450"/>
</dbReference>
<dbReference type="SUPFAM" id="SSF48264">
    <property type="entry name" value="Cytochrome P450"/>
    <property type="match status" value="1"/>
</dbReference>
<dbReference type="PROSITE" id="PS00086">
    <property type="entry name" value="CYTOCHROME_P450"/>
    <property type="match status" value="1"/>
</dbReference>
<proteinExistence type="evidence at protein level"/>
<gene>
    <name evidence="5" type="primary">KAO1</name>
    <name evidence="5" type="synonym">GPR5</name>
</gene>
<protein>
    <recommendedName>
        <fullName evidence="5">Ent-kaurenoic acid oxidase 1</fullName>
        <ecNumber evidence="4">1.14.14.107</ecNumber>
    </recommendedName>
    <alternativeName>
        <fullName evidence="5">gpr5</fullName>
    </alternativeName>
</protein>
<comment type="function">
    <text evidence="4">Catalyzes three successive oxidations of ent-kaurenoic acid giving gibberellin 12 (GA12), a key step in gibberellins (GAs) biosynthesis. GAs, which are involved many processes, including stem elongation, play a central role in plant development.</text>
</comment>
<comment type="catalytic activity">
    <reaction evidence="4">
        <text>ent-kaur-16-en-19-oate + 3 reduced [NADPH--hemoprotein reductase] + 3 O2 = gibberellin A12 + 3 oxidized [NADPH--hemoprotein reductase] + 4 H2O + 4 H(+)</text>
        <dbReference type="Rhea" id="RHEA:33219"/>
        <dbReference type="Rhea" id="RHEA-COMP:11964"/>
        <dbReference type="Rhea" id="RHEA-COMP:11965"/>
        <dbReference type="ChEBI" id="CHEBI:15377"/>
        <dbReference type="ChEBI" id="CHEBI:15378"/>
        <dbReference type="ChEBI" id="CHEBI:15379"/>
        <dbReference type="ChEBI" id="CHEBI:57297"/>
        <dbReference type="ChEBI" id="CHEBI:57618"/>
        <dbReference type="ChEBI" id="CHEBI:58210"/>
        <dbReference type="ChEBI" id="CHEBI:58627"/>
        <dbReference type="EC" id="1.14.14.107"/>
    </reaction>
    <physiologicalReaction direction="left-to-right" evidence="4">
        <dbReference type="Rhea" id="RHEA:33220"/>
    </physiologicalReaction>
</comment>
<comment type="catalytic activity">
    <reaction evidence="4">
        <text>ent-kaur-16-en-19-oate + reduced [NADPH--hemoprotein reductase] + O2 = ent-7alpha-hydroxykaur-16-en-19-oate + oxidized [NADPH--hemoprotein reductase] + H2O + H(+)</text>
        <dbReference type="Rhea" id="RHEA:19241"/>
        <dbReference type="Rhea" id="RHEA-COMP:11964"/>
        <dbReference type="Rhea" id="RHEA-COMP:11965"/>
        <dbReference type="ChEBI" id="CHEBI:15377"/>
        <dbReference type="ChEBI" id="CHEBI:15378"/>
        <dbReference type="ChEBI" id="CHEBI:15379"/>
        <dbReference type="ChEBI" id="CHEBI:57297"/>
        <dbReference type="ChEBI" id="CHEBI:57298"/>
        <dbReference type="ChEBI" id="CHEBI:57618"/>
        <dbReference type="ChEBI" id="CHEBI:58210"/>
    </reaction>
    <physiologicalReaction direction="left-to-right" evidence="4">
        <dbReference type="Rhea" id="RHEA:19242"/>
    </physiologicalReaction>
</comment>
<comment type="catalytic activity">
    <reaction evidence="4">
        <text>ent-7alpha-hydroxykaur-16-en-19-oate + reduced [NADPH--hemoprotein reductase] + O2 = gibberellin A12 aldehyde + oxidized [NADPH--hemoprotein reductase] + 2 H2O + H(+)</text>
        <dbReference type="Rhea" id="RHEA:22904"/>
        <dbReference type="Rhea" id="RHEA-COMP:11964"/>
        <dbReference type="Rhea" id="RHEA-COMP:11965"/>
        <dbReference type="ChEBI" id="CHEBI:15377"/>
        <dbReference type="ChEBI" id="CHEBI:15378"/>
        <dbReference type="ChEBI" id="CHEBI:15379"/>
        <dbReference type="ChEBI" id="CHEBI:57298"/>
        <dbReference type="ChEBI" id="CHEBI:57432"/>
        <dbReference type="ChEBI" id="CHEBI:57618"/>
        <dbReference type="ChEBI" id="CHEBI:58210"/>
    </reaction>
    <physiologicalReaction direction="left-to-right" evidence="4">
        <dbReference type="Rhea" id="RHEA:22905"/>
    </physiologicalReaction>
</comment>
<comment type="catalytic activity">
    <reaction evidence="4">
        <text>gibberellin A12 aldehyde + reduced [NADPH--hemoprotein reductase] + O2 = gibberellin A12 + oxidized [NADPH--hemoprotein reductase] + H2O + 2 H(+)</text>
        <dbReference type="Rhea" id="RHEA:22700"/>
        <dbReference type="Rhea" id="RHEA-COMP:11964"/>
        <dbReference type="Rhea" id="RHEA-COMP:11965"/>
        <dbReference type="ChEBI" id="CHEBI:15377"/>
        <dbReference type="ChEBI" id="CHEBI:15378"/>
        <dbReference type="ChEBI" id="CHEBI:15379"/>
        <dbReference type="ChEBI" id="CHEBI:57432"/>
        <dbReference type="ChEBI" id="CHEBI:57618"/>
        <dbReference type="ChEBI" id="CHEBI:58210"/>
        <dbReference type="ChEBI" id="CHEBI:58627"/>
    </reaction>
    <physiologicalReaction direction="left-to-right" evidence="4">
        <dbReference type="Rhea" id="RHEA:22701"/>
    </physiologicalReaction>
</comment>
<comment type="cofactor">
    <cofactor evidence="2">
        <name>heme</name>
        <dbReference type="ChEBI" id="CHEBI:30413"/>
    </cofactor>
</comment>
<comment type="pathway">
    <text evidence="4">Plant hormone biosynthesis; gibberellin biosynthesis.</text>
</comment>
<comment type="subcellular location">
    <subcellularLocation>
        <location evidence="1">Endoplasmic reticulum membrane</location>
        <topology evidence="3">Single-pass membrane protein</topology>
    </subcellularLocation>
</comment>
<comment type="similarity">
    <text evidence="6">Belongs to the cytochrome P450 family.</text>
</comment>
<keyword id="KW-0256">Endoplasmic reticulum</keyword>
<keyword id="KW-0349">Heme</keyword>
<keyword id="KW-0408">Iron</keyword>
<keyword id="KW-0472">Membrane</keyword>
<keyword id="KW-0479">Metal-binding</keyword>
<keyword id="KW-0503">Monooxygenase</keyword>
<keyword id="KW-0560">Oxidoreductase</keyword>
<keyword id="KW-0812">Transmembrane</keyword>
<keyword id="KW-1133">Transmembrane helix</keyword>